<evidence type="ECO:0000250" key="1"/>
<evidence type="ECO:0000305" key="2"/>
<accession>B7VBA7</accession>
<reference key="1">
    <citation type="journal article" date="2009" name="Genome Res.">
        <title>Newly introduced genomic prophage islands are critical determinants of in vivo competitiveness in the Liverpool epidemic strain of Pseudomonas aeruginosa.</title>
        <authorList>
            <person name="Winstanley C."/>
            <person name="Langille M.G.I."/>
            <person name="Fothergill J.L."/>
            <person name="Kukavica-Ibrulj I."/>
            <person name="Paradis-Bleau C."/>
            <person name="Sanschagrin F."/>
            <person name="Thomson N.R."/>
            <person name="Winsor G.L."/>
            <person name="Quail M.A."/>
            <person name="Lennard N."/>
            <person name="Bignell A."/>
            <person name="Clarke L."/>
            <person name="Seeger K."/>
            <person name="Saunders D."/>
            <person name="Harris D."/>
            <person name="Parkhill J."/>
            <person name="Hancock R.E.W."/>
            <person name="Brinkman F.S.L."/>
            <person name="Levesque R.C."/>
        </authorList>
    </citation>
    <scope>NUCLEOTIDE SEQUENCE [LARGE SCALE GENOMIC DNA]</scope>
    <source>
        <strain>LESB58</strain>
    </source>
</reference>
<name>RRAAH_PSEA8</name>
<dbReference type="EC" id="4.1.3.17"/>
<dbReference type="EC" id="4.1.1.112"/>
<dbReference type="EMBL" id="FM209186">
    <property type="protein sequence ID" value="CAW28284.1"/>
    <property type="molecule type" value="Genomic_DNA"/>
</dbReference>
<dbReference type="SMR" id="B7VBA7"/>
<dbReference type="KEGG" id="pag:PLES_35571"/>
<dbReference type="HOGENOM" id="CLU_072626_4_0_6"/>
<dbReference type="GO" id="GO:0047443">
    <property type="term" value="F:4-hydroxy-4-methyl-2-oxoglutarate aldolase activity"/>
    <property type="evidence" value="ECO:0007669"/>
    <property type="project" value="UniProtKB-EC"/>
</dbReference>
<dbReference type="GO" id="GO:0046872">
    <property type="term" value="F:metal ion binding"/>
    <property type="evidence" value="ECO:0007669"/>
    <property type="project" value="UniProtKB-KW"/>
</dbReference>
<dbReference type="GO" id="GO:0008948">
    <property type="term" value="F:oxaloacetate decarboxylase activity"/>
    <property type="evidence" value="ECO:0007669"/>
    <property type="project" value="UniProtKB-EC"/>
</dbReference>
<dbReference type="GO" id="GO:0008428">
    <property type="term" value="F:ribonuclease inhibitor activity"/>
    <property type="evidence" value="ECO:0007669"/>
    <property type="project" value="InterPro"/>
</dbReference>
<dbReference type="GO" id="GO:0051252">
    <property type="term" value="P:regulation of RNA metabolic process"/>
    <property type="evidence" value="ECO:0007669"/>
    <property type="project" value="InterPro"/>
</dbReference>
<dbReference type="CDD" id="cd16841">
    <property type="entry name" value="RraA_family"/>
    <property type="match status" value="1"/>
</dbReference>
<dbReference type="Gene3D" id="3.50.30.40">
    <property type="entry name" value="Ribonuclease E inhibitor RraA/RraA-like"/>
    <property type="match status" value="1"/>
</dbReference>
<dbReference type="InterPro" id="IPR010203">
    <property type="entry name" value="RraA"/>
</dbReference>
<dbReference type="InterPro" id="IPR005493">
    <property type="entry name" value="RraA/RraA-like"/>
</dbReference>
<dbReference type="InterPro" id="IPR036704">
    <property type="entry name" value="RraA/RraA-like_sf"/>
</dbReference>
<dbReference type="NCBIfam" id="TIGR01935">
    <property type="entry name" value="NOT-MenG"/>
    <property type="match status" value="1"/>
</dbReference>
<dbReference type="NCBIfam" id="NF006875">
    <property type="entry name" value="PRK09372.1"/>
    <property type="match status" value="1"/>
</dbReference>
<dbReference type="NCBIfam" id="NF009134">
    <property type="entry name" value="PRK12487.1"/>
    <property type="match status" value="1"/>
</dbReference>
<dbReference type="PANTHER" id="PTHR33254">
    <property type="entry name" value="4-HYDROXY-4-METHYL-2-OXOGLUTARATE ALDOLASE 3-RELATED"/>
    <property type="match status" value="1"/>
</dbReference>
<dbReference type="PANTHER" id="PTHR33254:SF29">
    <property type="entry name" value="REGULATOR OF RIBONUCLEASE ACTIVITY A"/>
    <property type="match status" value="1"/>
</dbReference>
<dbReference type="Pfam" id="PF03737">
    <property type="entry name" value="RraA-like"/>
    <property type="match status" value="1"/>
</dbReference>
<dbReference type="SUPFAM" id="SSF89562">
    <property type="entry name" value="RraA-like"/>
    <property type="match status" value="1"/>
</dbReference>
<organism>
    <name type="scientific">Pseudomonas aeruginosa (strain LESB58)</name>
    <dbReference type="NCBI Taxonomy" id="557722"/>
    <lineage>
        <taxon>Bacteria</taxon>
        <taxon>Pseudomonadati</taxon>
        <taxon>Pseudomonadota</taxon>
        <taxon>Gammaproteobacteria</taxon>
        <taxon>Pseudomonadales</taxon>
        <taxon>Pseudomonadaceae</taxon>
        <taxon>Pseudomonas</taxon>
    </lineage>
</organism>
<gene>
    <name type="ordered locus">PLES_35571</name>
</gene>
<comment type="function">
    <text evidence="1">Catalyzes the aldol cleavage of 4-hydroxy-4-methyl-2-oxoglutarate (HMG) into 2 molecules of pyruvate. Also contains a secondary oxaloacetate (OAA) decarboxylase activity due to the common pyruvate enolate transition state formed following C-C bond cleavage in the retro-aldol and decarboxylation reactions (By similarity).</text>
</comment>
<comment type="catalytic activity">
    <reaction>
        <text>4-hydroxy-4-methyl-2-oxoglutarate = 2 pyruvate</text>
        <dbReference type="Rhea" id="RHEA:22748"/>
        <dbReference type="ChEBI" id="CHEBI:15361"/>
        <dbReference type="ChEBI" id="CHEBI:58276"/>
        <dbReference type="EC" id="4.1.3.17"/>
    </reaction>
</comment>
<comment type="catalytic activity">
    <reaction>
        <text>oxaloacetate + H(+) = pyruvate + CO2</text>
        <dbReference type="Rhea" id="RHEA:15641"/>
        <dbReference type="ChEBI" id="CHEBI:15361"/>
        <dbReference type="ChEBI" id="CHEBI:15378"/>
        <dbReference type="ChEBI" id="CHEBI:16452"/>
        <dbReference type="ChEBI" id="CHEBI:16526"/>
        <dbReference type="EC" id="4.1.1.112"/>
    </reaction>
</comment>
<comment type="cofactor">
    <cofactor evidence="1">
        <name>a divalent metal cation</name>
        <dbReference type="ChEBI" id="CHEBI:60240"/>
    </cofactor>
    <text evidence="1">Divalent metal cation.</text>
</comment>
<comment type="subunit">
    <text evidence="1">Homotrimer.</text>
</comment>
<comment type="similarity">
    <text evidence="2">Belongs to the class II aldolase/RraA-like family.</text>
</comment>
<proteinExistence type="inferred from homology"/>
<protein>
    <recommendedName>
        <fullName>Putative 4-hydroxy-4-methyl-2-oxoglutarate aldolase</fullName>
        <shortName>HMG aldolase</shortName>
        <ecNumber>4.1.3.17</ecNumber>
    </recommendedName>
    <alternativeName>
        <fullName>Oxaloacetate decarboxylase</fullName>
        <shortName>OAA decarboxylase</shortName>
        <ecNumber>4.1.1.112</ecNumber>
    </alternativeName>
    <alternativeName>
        <fullName>Regulator of ribonuclease activity homolog</fullName>
    </alternativeName>
    <alternativeName>
        <fullName>RraA-like protein</fullName>
    </alternativeName>
</protein>
<feature type="chain" id="PRO_1000194866" description="Putative 4-hydroxy-4-methyl-2-oxoglutarate aldolase">
    <location>
        <begin position="1"/>
        <end position="162"/>
    </location>
</feature>
<feature type="binding site" evidence="1">
    <location>
        <begin position="75"/>
        <end position="78"/>
    </location>
    <ligand>
        <name>substrate</name>
    </ligand>
</feature>
<feature type="binding site" evidence="1">
    <location>
        <position position="97"/>
    </location>
    <ligand>
        <name>substrate</name>
    </ligand>
</feature>
<feature type="binding site" evidence="1">
    <location>
        <position position="98"/>
    </location>
    <ligand>
        <name>a divalent metal cation</name>
        <dbReference type="ChEBI" id="CHEBI:60240"/>
    </ligand>
</feature>
<keyword id="KW-0456">Lyase</keyword>
<keyword id="KW-0479">Metal-binding</keyword>
<sequence>MHYVTPDLCDAYPELVQVVEPMFSNFGGRDSFGGEIVTIKCFEDNSLVKEQVDKDGKGKVLVVDGGGSLRRALLGDMLAEKAAKNGWEGIVVYGCIRDVDVIAQTDLGVQALASHPLKTDKRGIGDLNVAVTFGGVTFRPGEFVYADNNGIIVSPQALKMPE</sequence>